<accession>A9V3P1</accession>
<proteinExistence type="inferred from homology"/>
<protein>
    <recommendedName>
        <fullName evidence="1">Eukaryotic translation initiation factor 3 subunit H</fullName>
        <shortName evidence="1">eIF3h</shortName>
    </recommendedName>
</protein>
<reference key="1">
    <citation type="journal article" date="2008" name="Nature">
        <title>The genome of the choanoflagellate Monosiga brevicollis and the origin of metazoans.</title>
        <authorList>
            <consortium name="JGI Sequencing"/>
            <person name="King N."/>
            <person name="Westbrook M.J."/>
            <person name="Young S.L."/>
            <person name="Kuo A."/>
            <person name="Abedin M."/>
            <person name="Chapman J."/>
            <person name="Fairclough S."/>
            <person name="Hellsten U."/>
            <person name="Isogai Y."/>
            <person name="Letunic I."/>
            <person name="Marr M."/>
            <person name="Pincus D."/>
            <person name="Putnam N."/>
            <person name="Rokas A."/>
            <person name="Wright K.J."/>
            <person name="Zuzow R."/>
            <person name="Dirks W."/>
            <person name="Good M."/>
            <person name="Goodstein D."/>
            <person name="Lemons D."/>
            <person name="Li W."/>
            <person name="Lyons J.B."/>
            <person name="Morris A."/>
            <person name="Nichols S."/>
            <person name="Richter D.J."/>
            <person name="Salamov A."/>
            <person name="Bork P."/>
            <person name="Lim W.A."/>
            <person name="Manning G."/>
            <person name="Miller W.T."/>
            <person name="McGinnis W."/>
            <person name="Shapiro H."/>
            <person name="Tjian R."/>
            <person name="Grigoriev I.V."/>
            <person name="Rokhsar D."/>
        </authorList>
    </citation>
    <scope>NUCLEOTIDE SEQUENCE [LARGE SCALE GENOMIC DNA]</scope>
    <source>
        <strain>MX1 / ATCC 50154</strain>
    </source>
</reference>
<evidence type="ECO:0000255" key="1">
    <source>
        <dbReference type="HAMAP-Rule" id="MF_03007"/>
    </source>
</evidence>
<evidence type="ECO:0000255" key="2">
    <source>
        <dbReference type="PROSITE-ProRule" id="PRU01182"/>
    </source>
</evidence>
<evidence type="ECO:0000256" key="3">
    <source>
        <dbReference type="SAM" id="MobiDB-lite"/>
    </source>
</evidence>
<gene>
    <name type="ORF">9558</name>
</gene>
<keyword id="KW-0963">Cytoplasm</keyword>
<keyword id="KW-0396">Initiation factor</keyword>
<keyword id="KW-0648">Protein biosynthesis</keyword>
<keyword id="KW-1185">Reference proteome</keyword>
<comment type="function">
    <text evidence="1">Component of the eukaryotic translation initiation factor 3 (eIF-3) complex, which is involved in protein synthesis of a specialized repertoire of mRNAs and, together with other initiation factors, stimulates binding of mRNA and methionyl-tRNAi to the 40S ribosome. The eIF-3 complex specifically targets and initiates translation of a subset of mRNAs involved in cell proliferation.</text>
</comment>
<comment type="subunit">
    <text evidence="1">Component of the eukaryotic translation initiation factor 3 (eIF-3) complex.</text>
</comment>
<comment type="subcellular location">
    <subcellularLocation>
        <location evidence="1">Cytoplasm</location>
    </subcellularLocation>
</comment>
<comment type="similarity">
    <text evidence="1">Belongs to the eIF-3 subunit H family.</text>
</comment>
<feature type="chain" id="PRO_0000365214" description="Eukaryotic translation initiation factor 3 subunit H">
    <location>
        <begin position="1"/>
        <end position="354"/>
    </location>
</feature>
<feature type="domain" description="MPN" evidence="2">
    <location>
        <begin position="33"/>
        <end position="174"/>
    </location>
</feature>
<feature type="region of interest" description="Disordered" evidence="3">
    <location>
        <begin position="1"/>
        <end position="28"/>
    </location>
</feature>
<feature type="compositionally biased region" description="Polar residues" evidence="3">
    <location>
        <begin position="19"/>
        <end position="28"/>
    </location>
</feature>
<name>EIF3H_MONBE</name>
<dbReference type="EMBL" id="CH991557">
    <property type="protein sequence ID" value="EDQ87737.1"/>
    <property type="molecule type" value="Genomic_DNA"/>
</dbReference>
<dbReference type="RefSeq" id="XP_001747270.1">
    <property type="nucleotide sequence ID" value="XM_001747218.1"/>
</dbReference>
<dbReference type="SMR" id="A9V3P1"/>
<dbReference type="FunCoup" id="A9V3P1">
    <property type="interactions" value="1477"/>
</dbReference>
<dbReference type="STRING" id="81824.A9V3P1"/>
<dbReference type="MEROPS" id="M67.971"/>
<dbReference type="EnsemblProtists" id="EDQ87737">
    <property type="protein sequence ID" value="EDQ87737"/>
    <property type="gene ID" value="MONBRDRAFT_9558"/>
</dbReference>
<dbReference type="KEGG" id="mbr:MONBRDRAFT_9558"/>
<dbReference type="eggNOG" id="KOG1560">
    <property type="taxonomic scope" value="Eukaryota"/>
</dbReference>
<dbReference type="InParanoid" id="A9V3P1"/>
<dbReference type="OMA" id="WYQSTYF"/>
<dbReference type="Proteomes" id="UP000001357">
    <property type="component" value="Unassembled WGS sequence"/>
</dbReference>
<dbReference type="GO" id="GO:0016282">
    <property type="term" value="C:eukaryotic 43S preinitiation complex"/>
    <property type="evidence" value="ECO:0000318"/>
    <property type="project" value="GO_Central"/>
</dbReference>
<dbReference type="GO" id="GO:0033290">
    <property type="term" value="C:eukaryotic 48S preinitiation complex"/>
    <property type="evidence" value="ECO:0007669"/>
    <property type="project" value="UniProtKB-UniRule"/>
</dbReference>
<dbReference type="GO" id="GO:0005852">
    <property type="term" value="C:eukaryotic translation initiation factor 3 complex"/>
    <property type="evidence" value="ECO:0000318"/>
    <property type="project" value="GO_Central"/>
</dbReference>
<dbReference type="GO" id="GO:0008237">
    <property type="term" value="F:metallopeptidase activity"/>
    <property type="evidence" value="ECO:0000318"/>
    <property type="project" value="GO_Central"/>
</dbReference>
<dbReference type="GO" id="GO:0003743">
    <property type="term" value="F:translation initiation factor activity"/>
    <property type="evidence" value="ECO:0007669"/>
    <property type="project" value="UniProtKB-UniRule"/>
</dbReference>
<dbReference type="GO" id="GO:0001732">
    <property type="term" value="P:formation of cytoplasmic translation initiation complex"/>
    <property type="evidence" value="ECO:0007669"/>
    <property type="project" value="UniProtKB-UniRule"/>
</dbReference>
<dbReference type="GO" id="GO:0006413">
    <property type="term" value="P:translational initiation"/>
    <property type="evidence" value="ECO:0000318"/>
    <property type="project" value="GO_Central"/>
</dbReference>
<dbReference type="CDD" id="cd08065">
    <property type="entry name" value="MPN_eIF3h"/>
    <property type="match status" value="1"/>
</dbReference>
<dbReference type="Gene3D" id="3.40.140.10">
    <property type="entry name" value="Cytidine Deaminase, domain 2"/>
    <property type="match status" value="1"/>
</dbReference>
<dbReference type="HAMAP" id="MF_03007">
    <property type="entry name" value="eIF3h"/>
    <property type="match status" value="1"/>
</dbReference>
<dbReference type="InterPro" id="IPR027524">
    <property type="entry name" value="eIF3h"/>
</dbReference>
<dbReference type="InterPro" id="IPR045810">
    <property type="entry name" value="eIF3h_C"/>
</dbReference>
<dbReference type="InterPro" id="IPR000555">
    <property type="entry name" value="JAMM/MPN+_dom"/>
</dbReference>
<dbReference type="InterPro" id="IPR050242">
    <property type="entry name" value="JAMM_MPN+_peptidase_M67A"/>
</dbReference>
<dbReference type="InterPro" id="IPR037518">
    <property type="entry name" value="MPN"/>
</dbReference>
<dbReference type="PANTHER" id="PTHR10410">
    <property type="entry name" value="EUKARYOTIC TRANSLATION INITIATION FACTOR 3 -RELATED"/>
    <property type="match status" value="1"/>
</dbReference>
<dbReference type="Pfam" id="PF19445">
    <property type="entry name" value="eIF3h_C"/>
    <property type="match status" value="1"/>
</dbReference>
<dbReference type="Pfam" id="PF01398">
    <property type="entry name" value="JAB"/>
    <property type="match status" value="1"/>
</dbReference>
<dbReference type="SMART" id="SM00232">
    <property type="entry name" value="JAB_MPN"/>
    <property type="match status" value="1"/>
</dbReference>
<dbReference type="PROSITE" id="PS50249">
    <property type="entry name" value="MPN"/>
    <property type="match status" value="1"/>
</dbReference>
<sequence>MATRQPYQKKFQSRDQREQTSSQQAPNSVVKQVTVDALVVMKIIKHARENPHEPVRGPLLGLSQLADASKPGEDALLEVTNCFPTPRVSDDDDDSIVQQYQVQMMRWLREVNVDHMNVGWYQAADMGTFFDEDVAAVQFQHQRHMAESVVLIYDPVLTLQGTLSLSAFRLSNKAMELFSTDSFNPKAVREAGLTYRTVFEKVPVTIRASSMARLLIPELSANLDQSEIFDRMDLNATSFMSRNIKLLMEGIDDLSQEAYKFQQYHRNATKAKASLDAQLEARRAENEQLRAKGLPEKSEAELVANHKTPTPPSRLGSLLVTAQINTFCKQVSDFSGQSFGKLYIAKATQPEAEE</sequence>
<organism>
    <name type="scientific">Monosiga brevicollis</name>
    <name type="common">Choanoflagellate</name>
    <dbReference type="NCBI Taxonomy" id="81824"/>
    <lineage>
        <taxon>Eukaryota</taxon>
        <taxon>Choanoflagellata</taxon>
        <taxon>Craspedida</taxon>
        <taxon>Salpingoecidae</taxon>
        <taxon>Monosiga</taxon>
    </lineage>
</organism>